<sequence length="222" mass="25420">APQTVYEWTADVAVRFLKEWNFLLGIILLFITIILQFGYTSRSMFIYVVKMIILWLMWPLTIVLCIFNCVYALNNVYLGFSIVFTIVSIVMWIMYFVNSIRLFIRTGSWWSFNPETNNLMCIDVKGTVYVRPIIEDYHTLTATNVRGHLYMQGVKLGTGFSLSDLPAYVTVAKVSHLCTYKRAFLDKVDGVSGFAVYVKSKVGNYRLPSNKPSGVDTALLRI</sequence>
<dbReference type="EMBL" id="AF088985">
    <property type="protein sequence ID" value="AAD33105.1"/>
    <property type="molecule type" value="Genomic_RNA"/>
</dbReference>
<dbReference type="SMR" id="Q9WCD1"/>
<dbReference type="GlyCosmos" id="Q9WCD1">
    <property type="glycosylation" value="1 site, No reported glycans"/>
</dbReference>
<dbReference type="GO" id="GO:0044178">
    <property type="term" value="C:host cell Golgi membrane"/>
    <property type="evidence" value="ECO:0007669"/>
    <property type="project" value="UniProtKB-SubCell"/>
</dbReference>
<dbReference type="GO" id="GO:0016020">
    <property type="term" value="C:membrane"/>
    <property type="evidence" value="ECO:0007669"/>
    <property type="project" value="UniProtKB-KW"/>
</dbReference>
<dbReference type="GO" id="GO:0019031">
    <property type="term" value="C:viral envelope"/>
    <property type="evidence" value="ECO:0007669"/>
    <property type="project" value="UniProtKB-KW"/>
</dbReference>
<dbReference type="GO" id="GO:0055036">
    <property type="term" value="C:virion membrane"/>
    <property type="evidence" value="ECO:0007669"/>
    <property type="project" value="UniProtKB-SubCell"/>
</dbReference>
<dbReference type="GO" id="GO:0039660">
    <property type="term" value="F:structural constituent of virion"/>
    <property type="evidence" value="ECO:0007669"/>
    <property type="project" value="UniProtKB-KW"/>
</dbReference>
<dbReference type="CDD" id="cd21568">
    <property type="entry name" value="HCoV-like_M"/>
    <property type="match status" value="1"/>
</dbReference>
<dbReference type="InterPro" id="IPR002574">
    <property type="entry name" value="M_CoV"/>
</dbReference>
<dbReference type="InterPro" id="IPR044362">
    <property type="entry name" value="M_HCoV-like"/>
</dbReference>
<dbReference type="Pfam" id="PF01635">
    <property type="entry name" value="CoV_M"/>
    <property type="match status" value="1"/>
</dbReference>
<dbReference type="PROSITE" id="PS51927">
    <property type="entry name" value="COV_M"/>
    <property type="match status" value="1"/>
</dbReference>
<feature type="chain" id="PRO_0000106043" description="Membrane protein">
    <location>
        <begin position="1" status="less than"/>
        <end position="222"/>
    </location>
</feature>
<feature type="topological domain" description="Virion surface" evidence="2">
    <location>
        <begin position="1" status="less than"/>
        <end position="19"/>
    </location>
</feature>
<feature type="transmembrane region" description="Helical" evidence="2">
    <location>
        <begin position="20"/>
        <end position="40"/>
    </location>
</feature>
<feature type="topological domain" description="Intravirion" evidence="2">
    <location>
        <begin position="41"/>
        <end position="43"/>
    </location>
</feature>
<feature type="transmembrane region" description="Helical" evidence="2">
    <location>
        <begin position="44"/>
        <end position="64"/>
    </location>
</feature>
<feature type="topological domain" description="Virion surface" evidence="2">
    <location>
        <begin position="65"/>
        <end position="75"/>
    </location>
</feature>
<feature type="transmembrane region" description="Helical" evidence="2">
    <location>
        <begin position="76"/>
        <end position="96"/>
    </location>
</feature>
<feature type="topological domain" description="Intravirion" evidence="2">
    <location>
        <begin position="97"/>
        <end position="222"/>
    </location>
</feature>
<feature type="glycosylation site" description="O-linked (GalNAc...) threonine; by host" evidence="1">
    <location>
        <position position="9"/>
    </location>
</feature>
<feature type="non-terminal residue">
    <location>
        <position position="1"/>
    </location>
</feature>
<name>VME1_CVRNJ</name>
<proteinExistence type="inferred from homology"/>
<reference key="1">
    <citation type="journal article" date="1999" name="Lab. Anim. Sci.">
        <title>Reverse transcriptase polymerase chain reaction-based diagnosis and molecular characterization of a new rat coronavirus strain.</title>
        <authorList>
            <person name="Compton S.R."/>
            <person name="Vivas-Gonzalez B.E."/>
            <person name="Macy J.D."/>
        </authorList>
    </citation>
    <scope>NUCLEOTIDE SEQUENCE [GENOMIC RNA]</scope>
</reference>
<organismHost>
    <name type="scientific">Rattus norvegicus</name>
    <name type="common">Rat</name>
    <dbReference type="NCBI Taxonomy" id="10116"/>
</organismHost>
<protein>
    <recommendedName>
        <fullName>Membrane protein</fullName>
        <shortName>M protein</shortName>
    </recommendedName>
    <alternativeName>
        <fullName>E1 glycoprotein</fullName>
    </alternativeName>
    <alternativeName>
        <fullName>Matrix glycoprotein</fullName>
    </alternativeName>
    <alternativeName>
        <fullName>Membrane glycoprotein</fullName>
    </alternativeName>
</protein>
<accession>Q9WCD1</accession>
<comment type="function">
    <text evidence="3">Component of the viral envelope that plays a central role in virus morphogenesis and assembly via its interactions with other viral proteins.</text>
</comment>
<comment type="subunit">
    <text evidence="3">Homomultimer. Interacts with envelope E protein in the budding compartment of the host cell, which is located between endoplasmic reticulum and the Golgi complex. Forms a complex with HE and S proteins. Interacts with nucleocapsid N protein. This interaction probably participates in RNA packaging into the virus.</text>
</comment>
<comment type="subcellular location">
    <subcellularLocation>
        <location evidence="4">Virion membrane</location>
        <topology evidence="4">Multi-pass membrane protein</topology>
    </subcellularLocation>
    <subcellularLocation>
        <location evidence="4">Host Golgi apparatus membrane</location>
        <topology evidence="4">Multi-pass membrane protein</topology>
    </subcellularLocation>
    <text evidence="1">Largely embedded in the lipid bilayer.</text>
</comment>
<comment type="PTM">
    <text evidence="1">O-linked glycans consist of Gal-GalNAc disaccharides which are modified with up to 2 sialic acid residues.</text>
</comment>
<comment type="similarity">
    <text evidence="4">Belongs to the coronaviruses M protein family.</text>
</comment>
<evidence type="ECO:0000250" key="1"/>
<evidence type="ECO:0000255" key="2"/>
<evidence type="ECO:0000255" key="3">
    <source>
        <dbReference type="PROSITE-ProRule" id="PRU01275"/>
    </source>
</evidence>
<evidence type="ECO:0000305" key="4"/>
<keyword id="KW-0325">Glycoprotein</keyword>
<keyword id="KW-1040">Host Golgi apparatus</keyword>
<keyword id="KW-1043">Host membrane</keyword>
<keyword id="KW-0472">Membrane</keyword>
<keyword id="KW-0812">Transmembrane</keyword>
<keyword id="KW-1133">Transmembrane helix</keyword>
<keyword id="KW-0261">Viral envelope protein</keyword>
<keyword id="KW-0468">Viral matrix protein</keyword>
<keyword id="KW-0946">Virion</keyword>
<organism>
    <name type="scientific">Rat coronavirus (strain NJ)</name>
    <name type="common">RCV-NJ</name>
    <dbReference type="NCBI Taxonomy" id="231433"/>
    <lineage>
        <taxon>Viruses</taxon>
        <taxon>Riboviria</taxon>
        <taxon>Orthornavirae</taxon>
        <taxon>Pisuviricota</taxon>
        <taxon>Pisoniviricetes</taxon>
        <taxon>Nidovirales</taxon>
        <taxon>Cornidovirineae</taxon>
        <taxon>Coronaviridae</taxon>
        <taxon>Orthocoronavirinae</taxon>
        <taxon>Betacoronavirus</taxon>
        <taxon>Embecovirus</taxon>
        <taxon>Murine coronavirus</taxon>
    </lineage>
</organism>
<gene>
    <name type="primary">M</name>
</gene>